<reference key="1">
    <citation type="submission" date="2007-11" db="EMBL/GenBank/DDBJ databases">
        <title>Complete sequence of chromosome of Shewanella baltica OS195.</title>
        <authorList>
            <consortium name="US DOE Joint Genome Institute"/>
            <person name="Copeland A."/>
            <person name="Lucas S."/>
            <person name="Lapidus A."/>
            <person name="Barry K."/>
            <person name="Glavina del Rio T."/>
            <person name="Dalin E."/>
            <person name="Tice H."/>
            <person name="Pitluck S."/>
            <person name="Chain P."/>
            <person name="Malfatti S."/>
            <person name="Shin M."/>
            <person name="Vergez L."/>
            <person name="Schmutz J."/>
            <person name="Larimer F."/>
            <person name="Land M."/>
            <person name="Hauser L."/>
            <person name="Kyrpides N."/>
            <person name="Kim E."/>
            <person name="Brettar I."/>
            <person name="Rodrigues J."/>
            <person name="Konstantinidis K."/>
            <person name="Klappenbach J."/>
            <person name="Hofle M."/>
            <person name="Tiedje J."/>
            <person name="Richardson P."/>
        </authorList>
    </citation>
    <scope>NUCLEOTIDE SEQUENCE [LARGE SCALE GENOMIC DNA]</scope>
    <source>
        <strain>OS195</strain>
    </source>
</reference>
<sequence>MQGAKNNIYTVSRLNGEVRQILEGQLGKIWLNGEISNFSSPSSGHWYLTLKDHSSQIRCAMFKGRNQTVSFKPINGQQVLVKGAISVYEPRGDYQLLIESMLPAGDGLLAQQFDALKMKLAAEGLFAADTKRPLPKNIQRIGVITSPTGAAIRDVLHVLARRDPSIEVIIYPTQVQGETAAQSICQAINIANQRLEVDVLLLTRGGGSLEDLWCFNSEALAHTIYNSALPVVSAVGHEVDTTISDYVADIRAPTPSAGAELLSQDSDNKAQKLATALSRLQQSAKHYQLKQERRLSLLEHRLQRQDPKRTLQQFEQRFDEMQLRLESALSNRLHILSRRQQLLASRLEQQSPKHKLAIEGNRLSYLASRLQDALQDKLSQSEQRIQYAAHQLETVSPLATLSRGYSITTDIHNQVADSADKLTIGDSLQTRFRHGQVISTVTQIKLLE</sequence>
<protein>
    <recommendedName>
        <fullName evidence="1">Exodeoxyribonuclease 7 large subunit</fullName>
        <ecNumber evidence="1">3.1.11.6</ecNumber>
    </recommendedName>
    <alternativeName>
        <fullName evidence="1">Exodeoxyribonuclease VII large subunit</fullName>
        <shortName evidence="1">Exonuclease VII large subunit</shortName>
    </alternativeName>
</protein>
<feature type="chain" id="PRO_1000079991" description="Exodeoxyribonuclease 7 large subunit">
    <location>
        <begin position="1"/>
        <end position="448"/>
    </location>
</feature>
<evidence type="ECO:0000255" key="1">
    <source>
        <dbReference type="HAMAP-Rule" id="MF_00378"/>
    </source>
</evidence>
<gene>
    <name evidence="1" type="primary">xseA</name>
    <name type="ordered locus">Sbal195_3143</name>
</gene>
<proteinExistence type="inferred from homology"/>
<accession>A9KWW8</accession>
<comment type="function">
    <text evidence="1">Bidirectionally degrades single-stranded DNA into large acid-insoluble oligonucleotides, which are then degraded further into small acid-soluble oligonucleotides.</text>
</comment>
<comment type="catalytic activity">
    <reaction evidence="1">
        <text>Exonucleolytic cleavage in either 5'- to 3'- or 3'- to 5'-direction to yield nucleoside 5'-phosphates.</text>
        <dbReference type="EC" id="3.1.11.6"/>
    </reaction>
</comment>
<comment type="subunit">
    <text evidence="1">Heterooligomer composed of large and small subunits.</text>
</comment>
<comment type="subcellular location">
    <subcellularLocation>
        <location evidence="1">Cytoplasm</location>
    </subcellularLocation>
</comment>
<comment type="similarity">
    <text evidence="1">Belongs to the XseA family.</text>
</comment>
<dbReference type="EC" id="3.1.11.6" evidence="1"/>
<dbReference type="EMBL" id="CP000891">
    <property type="protein sequence ID" value="ABX50305.1"/>
    <property type="molecule type" value="Genomic_DNA"/>
</dbReference>
<dbReference type="RefSeq" id="WP_006085678.1">
    <property type="nucleotide sequence ID" value="NC_009997.1"/>
</dbReference>
<dbReference type="SMR" id="A9KWW8"/>
<dbReference type="GeneID" id="11774892"/>
<dbReference type="KEGG" id="sbn:Sbal195_3143"/>
<dbReference type="HOGENOM" id="CLU_023625_3_1_6"/>
<dbReference type="Proteomes" id="UP000000770">
    <property type="component" value="Chromosome"/>
</dbReference>
<dbReference type="GO" id="GO:0005737">
    <property type="term" value="C:cytoplasm"/>
    <property type="evidence" value="ECO:0007669"/>
    <property type="project" value="UniProtKB-SubCell"/>
</dbReference>
<dbReference type="GO" id="GO:0009318">
    <property type="term" value="C:exodeoxyribonuclease VII complex"/>
    <property type="evidence" value="ECO:0007669"/>
    <property type="project" value="InterPro"/>
</dbReference>
<dbReference type="GO" id="GO:0008855">
    <property type="term" value="F:exodeoxyribonuclease VII activity"/>
    <property type="evidence" value="ECO:0007669"/>
    <property type="project" value="UniProtKB-UniRule"/>
</dbReference>
<dbReference type="GO" id="GO:0003676">
    <property type="term" value="F:nucleic acid binding"/>
    <property type="evidence" value="ECO:0007669"/>
    <property type="project" value="InterPro"/>
</dbReference>
<dbReference type="GO" id="GO:0006308">
    <property type="term" value="P:DNA catabolic process"/>
    <property type="evidence" value="ECO:0007669"/>
    <property type="project" value="UniProtKB-UniRule"/>
</dbReference>
<dbReference type="CDD" id="cd04489">
    <property type="entry name" value="ExoVII_LU_OBF"/>
    <property type="match status" value="1"/>
</dbReference>
<dbReference type="HAMAP" id="MF_00378">
    <property type="entry name" value="Exonuc_7_L"/>
    <property type="match status" value="1"/>
</dbReference>
<dbReference type="InterPro" id="IPR003753">
    <property type="entry name" value="Exonuc_VII_L"/>
</dbReference>
<dbReference type="InterPro" id="IPR020579">
    <property type="entry name" value="Exonuc_VII_lsu_C"/>
</dbReference>
<dbReference type="InterPro" id="IPR025824">
    <property type="entry name" value="OB-fold_nuc-bd_dom"/>
</dbReference>
<dbReference type="NCBIfam" id="TIGR00237">
    <property type="entry name" value="xseA"/>
    <property type="match status" value="1"/>
</dbReference>
<dbReference type="PANTHER" id="PTHR30008">
    <property type="entry name" value="EXODEOXYRIBONUCLEASE 7 LARGE SUBUNIT"/>
    <property type="match status" value="1"/>
</dbReference>
<dbReference type="PANTHER" id="PTHR30008:SF0">
    <property type="entry name" value="EXODEOXYRIBONUCLEASE 7 LARGE SUBUNIT"/>
    <property type="match status" value="1"/>
</dbReference>
<dbReference type="Pfam" id="PF02601">
    <property type="entry name" value="Exonuc_VII_L"/>
    <property type="match status" value="1"/>
</dbReference>
<dbReference type="Pfam" id="PF13742">
    <property type="entry name" value="tRNA_anti_2"/>
    <property type="match status" value="1"/>
</dbReference>
<organism>
    <name type="scientific">Shewanella baltica (strain OS195)</name>
    <dbReference type="NCBI Taxonomy" id="399599"/>
    <lineage>
        <taxon>Bacteria</taxon>
        <taxon>Pseudomonadati</taxon>
        <taxon>Pseudomonadota</taxon>
        <taxon>Gammaproteobacteria</taxon>
        <taxon>Alteromonadales</taxon>
        <taxon>Shewanellaceae</taxon>
        <taxon>Shewanella</taxon>
    </lineage>
</organism>
<name>EX7L_SHEB9</name>
<keyword id="KW-0963">Cytoplasm</keyword>
<keyword id="KW-0269">Exonuclease</keyword>
<keyword id="KW-0378">Hydrolase</keyword>
<keyword id="KW-0540">Nuclease</keyword>